<dbReference type="EC" id="6.3.2.29"/>
<dbReference type="EC" id="6.3.2.30"/>
<dbReference type="EMBL" id="AF220099">
    <property type="protein sequence ID" value="AAF43647.2"/>
    <property type="molecule type" value="Genomic_DNA"/>
</dbReference>
<dbReference type="SMR" id="P56947"/>
<dbReference type="BioCyc" id="MetaCyc:MONOMER-17423"/>
<dbReference type="BRENDA" id="6.3.2.29">
    <property type="organism ID" value="382"/>
</dbReference>
<dbReference type="BRENDA" id="6.3.2.30">
    <property type="organism ID" value="382"/>
</dbReference>
<dbReference type="GO" id="GO:0005524">
    <property type="term" value="F:ATP binding"/>
    <property type="evidence" value="ECO:0007669"/>
    <property type="project" value="UniProtKB-KW"/>
</dbReference>
<dbReference type="GO" id="GO:0071161">
    <property type="term" value="F:cyanophycin synthetase activity (L-arginine-adding)"/>
    <property type="evidence" value="ECO:0007669"/>
    <property type="project" value="UniProtKB-EC"/>
</dbReference>
<dbReference type="GO" id="GO:0071160">
    <property type="term" value="F:cyanophycin synthetase activity (L-aspartate-adding)"/>
    <property type="evidence" value="ECO:0007669"/>
    <property type="project" value="UniProtKB-EC"/>
</dbReference>
<dbReference type="GO" id="GO:0046872">
    <property type="term" value="F:metal ion binding"/>
    <property type="evidence" value="ECO:0007669"/>
    <property type="project" value="InterPro"/>
</dbReference>
<dbReference type="GO" id="GO:0009058">
    <property type="term" value="P:biosynthetic process"/>
    <property type="evidence" value="ECO:0007669"/>
    <property type="project" value="InterPro"/>
</dbReference>
<dbReference type="Gene3D" id="3.30.470.20">
    <property type="entry name" value="ATP-grasp fold, B domain"/>
    <property type="match status" value="2"/>
</dbReference>
<dbReference type="Gene3D" id="3.90.190.20">
    <property type="entry name" value="Mur ligase, C-terminal domain"/>
    <property type="match status" value="1"/>
</dbReference>
<dbReference type="Gene3D" id="3.40.1190.10">
    <property type="entry name" value="Mur-like, catalytic domain"/>
    <property type="match status" value="1"/>
</dbReference>
<dbReference type="InterPro" id="IPR011761">
    <property type="entry name" value="ATP-grasp"/>
</dbReference>
<dbReference type="InterPro" id="IPR013651">
    <property type="entry name" value="ATP-grasp_RimK-type"/>
</dbReference>
<dbReference type="InterPro" id="IPR011810">
    <property type="entry name" value="Cya_phycin_syn"/>
</dbReference>
<dbReference type="InterPro" id="IPR044019">
    <property type="entry name" value="Cyanophycin_syn_N"/>
</dbReference>
<dbReference type="InterPro" id="IPR036565">
    <property type="entry name" value="Mur-like_cat_sf"/>
</dbReference>
<dbReference type="InterPro" id="IPR004101">
    <property type="entry name" value="Mur_ligase_C"/>
</dbReference>
<dbReference type="InterPro" id="IPR036615">
    <property type="entry name" value="Mur_ligase_C_dom_sf"/>
</dbReference>
<dbReference type="InterPro" id="IPR013221">
    <property type="entry name" value="Mur_ligase_cen"/>
</dbReference>
<dbReference type="NCBIfam" id="TIGR02068">
    <property type="entry name" value="cya_phycin_syn"/>
    <property type="match status" value="1"/>
</dbReference>
<dbReference type="NCBIfam" id="NF010623">
    <property type="entry name" value="PRK14016.1"/>
    <property type="match status" value="1"/>
</dbReference>
<dbReference type="PANTHER" id="PTHR23135:SF18">
    <property type="entry name" value="CYANOPHYCIN SYNTHETASE"/>
    <property type="match status" value="1"/>
</dbReference>
<dbReference type="PANTHER" id="PTHR23135">
    <property type="entry name" value="MUR LIGASE FAMILY MEMBER"/>
    <property type="match status" value="1"/>
</dbReference>
<dbReference type="Pfam" id="PF18921">
    <property type="entry name" value="Cyanophycin_syn"/>
    <property type="match status" value="1"/>
</dbReference>
<dbReference type="Pfam" id="PF02875">
    <property type="entry name" value="Mur_ligase_C"/>
    <property type="match status" value="1"/>
</dbReference>
<dbReference type="Pfam" id="PF08245">
    <property type="entry name" value="Mur_ligase_M"/>
    <property type="match status" value="1"/>
</dbReference>
<dbReference type="Pfam" id="PF08443">
    <property type="entry name" value="RimK"/>
    <property type="match status" value="1"/>
</dbReference>
<dbReference type="SUPFAM" id="SSF56059">
    <property type="entry name" value="Glutathione synthetase ATP-binding domain-like"/>
    <property type="match status" value="1"/>
</dbReference>
<dbReference type="SUPFAM" id="SSF53623">
    <property type="entry name" value="MurD-like peptide ligases, catalytic domain"/>
    <property type="match status" value="1"/>
</dbReference>
<dbReference type="SUPFAM" id="SSF53244">
    <property type="entry name" value="MurD-like peptide ligases, peptide-binding domain"/>
    <property type="match status" value="1"/>
</dbReference>
<dbReference type="PROSITE" id="PS50975">
    <property type="entry name" value="ATP_GRASP"/>
    <property type="match status" value="1"/>
</dbReference>
<sequence>MKILKTQTLRGPNYWSIRRQKLIQMRLDLEDVAEKPSNLIPGFYEGLVKILPSLVEHFCSRDHRGGFLERVQEGTYMGHIVEHIALELQELAGMPVGFGRTRETSTPGIYNVVFEYVYEEAGRYAGRVAVRLCNSIITTGAYGLDELAQDLSDLKDLRANSALGPSTETIIKEAEARQIPWMLLSARAMVQLGYGANQQRIQATLSNKTGILGVELACDKEGTKTTLAEAGIPVPRGTVIYYADELADAIADVGGYPIVLKPLDGNHGRGITIDINSQQEAEEAYDLASAASKTRSVIVERYYKGNDHRVLVINGKLVAVSERIPAHVTGNGSSTIEELIQETNEHPDRGDGHDNVLTRISIDRTSLGVLKRQGFEMDTVLKKGEVAYLRATANLSTGGIAIDRTDEIHPQNIWIAERVAKIIGLDIAGIDVVTPDITKPLTEVDGVIVEVNAAPGFRMHVAPSQGLPRNVAAPVIDMLFPDNHPSRIPILAVTGTNGKTTTTRLLAHIYRQTGKVVGYTSTDGIYLGDYMVEKGDNTGPVSAGVILRDPTVEVAVLECARGGILRSGLAFESCDVGVVLNVAEDHLGLGDIDTIEQMAKVKGVIAESVNADGYAVLNADDPLVAQMAKNVKGKIAYFSMSKDNPIIIDHLRRNGMAAVYENGYLSIFEGEWTLRIEKAENIPVTMKAMAPFMIANALAASLAAFVHGIDIELIRQGVRSFNPGANQTPGRMNLFDMKDFSVLIDYAHNPAGYLAVGSFVKNWKGDRLGVIGGPGDRRDEDLMLLGKIASQIFDHIIIKEDDDNRGRDRGTVADLIAKGIVAENPNASYDDILDETEAIETGLKKVDKGGLVVIFPESVTGSIEMIEKYHLSSE</sequence>
<accession>P56947</accession>
<organism>
    <name type="scientific">Geminocystis herdmanii (strain PCC 6308)</name>
    <name type="common">Synechocystis sp. (strain PCC 6308)</name>
    <dbReference type="NCBI Taxonomy" id="113355"/>
    <lineage>
        <taxon>Bacteria</taxon>
        <taxon>Bacillati</taxon>
        <taxon>Cyanobacteriota</taxon>
        <taxon>Cyanophyceae</taxon>
        <taxon>Oscillatoriophycideae</taxon>
        <taxon>Chroococcales</taxon>
        <taxon>Geminocystaceae</taxon>
        <taxon>Geminocystis</taxon>
    </lineage>
</organism>
<feature type="chain" id="PRO_0000101715" description="Cyanophycin synthetase">
    <location>
        <begin position="1"/>
        <end position="874"/>
    </location>
</feature>
<feature type="domain" description="ATP-grasp" evidence="1">
    <location>
        <begin position="224"/>
        <end position="480"/>
    </location>
</feature>
<feature type="binding site" evidence="1">
    <location>
        <begin position="495"/>
        <end position="501"/>
    </location>
    <ligand>
        <name>ATP</name>
        <dbReference type="ChEBI" id="CHEBI:30616"/>
    </ligand>
</feature>
<gene>
    <name type="primary">cphA</name>
</gene>
<name>CPHA_GEMHP</name>
<protein>
    <recommendedName>
        <fullName>Cyanophycin synthetase</fullName>
        <ecNumber>6.3.2.29</ecNumber>
        <ecNumber>6.3.2.30</ecNumber>
    </recommendedName>
    <alternativeName>
        <fullName>Cyanophycin synthase</fullName>
    </alternativeName>
</protein>
<proteinExistence type="evidence at protein level"/>
<comment type="function">
    <text>Catalyzes the ATP-dependent polymerization of arginine and aspartate to multi-L-arginyl-poly-L-aspartic acid (cyanophycin; a water-insoluble reserve polymer).</text>
</comment>
<comment type="catalytic activity">
    <reaction evidence="2">
        <text>[L-4-(L-arginin-2-N-yl)aspartate](n) + L-aspartate + ATP = [L-4-(L-arginin-2-N-yl)aspartate](n)-L-aspartate + ADP + phosphate + H(+)</text>
        <dbReference type="Rhea" id="RHEA:13277"/>
        <dbReference type="Rhea" id="RHEA-COMP:13728"/>
        <dbReference type="Rhea" id="RHEA-COMP:13733"/>
        <dbReference type="ChEBI" id="CHEBI:15378"/>
        <dbReference type="ChEBI" id="CHEBI:29991"/>
        <dbReference type="ChEBI" id="CHEBI:30616"/>
        <dbReference type="ChEBI" id="CHEBI:43474"/>
        <dbReference type="ChEBI" id="CHEBI:137986"/>
        <dbReference type="ChEBI" id="CHEBI:137990"/>
        <dbReference type="ChEBI" id="CHEBI:456216"/>
        <dbReference type="EC" id="6.3.2.29"/>
    </reaction>
</comment>
<comment type="catalytic activity">
    <reaction evidence="2">
        <text>[L-4-(L-arginin-2-N-yl)aspartate](n)-L-aspartate + L-arginine + ATP = [L-4-(L-arginin-2-N-yl)aspartate](n+1) + ADP + phosphate + H(+)</text>
        <dbReference type="Rhea" id="RHEA:23888"/>
        <dbReference type="Rhea" id="RHEA-COMP:13732"/>
        <dbReference type="Rhea" id="RHEA-COMP:13733"/>
        <dbReference type="ChEBI" id="CHEBI:15378"/>
        <dbReference type="ChEBI" id="CHEBI:30616"/>
        <dbReference type="ChEBI" id="CHEBI:32682"/>
        <dbReference type="ChEBI" id="CHEBI:43474"/>
        <dbReference type="ChEBI" id="CHEBI:137986"/>
        <dbReference type="ChEBI" id="CHEBI:137990"/>
        <dbReference type="ChEBI" id="CHEBI:456216"/>
        <dbReference type="EC" id="6.3.2.30"/>
    </reaction>
</comment>
<comment type="biophysicochemical properties">
    <kinetics>
        <KM evidence="2">450 mM for L-aspartic acid</KM>
        <KM evidence="2">49 mM for L-arginine</KM>
        <KM evidence="2">200 mM for ATP</KM>
    </kinetics>
    <phDependence>
        <text evidence="2">Optimum pH is 8.2.</text>
    </phDependence>
    <temperatureDependence>
        <text evidence="2">Optimum temperature is 50 degrees Celsius.</text>
    </temperatureDependence>
</comment>
<comment type="subunit">
    <text evidence="4">Homodimer.</text>
</comment>
<comment type="similarity">
    <text evidence="3">In the C-terminal section; belongs to the MurCDEF family.</text>
</comment>
<keyword id="KW-0067">ATP-binding</keyword>
<keyword id="KW-0436">Ligase</keyword>
<keyword id="KW-0547">Nucleotide-binding</keyword>
<reference key="1">
    <citation type="journal article" date="2000" name="Arch. Microbiol.">
        <title>Molecular characterization of the cyanophycin synthetase from Synechocystis sp. strain PCC6308.</title>
        <authorList>
            <person name="Aboulmagd E."/>
            <person name="Oppermann-Sanio F.B."/>
            <person name="Steinbuechel A."/>
        </authorList>
    </citation>
    <scope>NUCLEOTIDE SEQUENCE [GENOMIC DNA]</scope>
</reference>
<reference key="2">
    <citation type="submission" date="2001-04" db="EMBL/GenBank/DDBJ databases">
        <authorList>
            <person name="Aboulmagd E."/>
            <person name="Oppermann-Sanio F.B."/>
            <person name="Steinbuechel A."/>
        </authorList>
    </citation>
    <scope>SEQUENCE REVISION TO 52-60</scope>
</reference>
<reference key="3">
    <citation type="journal article" date="2001" name="Appl. Environ. Microbiol.">
        <title>Purification of Synechocystis sp. strain PCC6308 cyanophycin synthetase and its characterization with respect to substrate and primer specificity.</title>
        <authorList>
            <person name="Aboulmagd E."/>
            <person name="Oppermann-Sanio F.B."/>
            <person name="Steinbuechel A."/>
        </authorList>
    </citation>
    <scope>CATALYTIC ACTIVITY</scope>
    <scope>BIOPHYSICOCHEMICAL PROPERTIES</scope>
    <scope>SUBUNIT</scope>
</reference>
<evidence type="ECO:0000255" key="1">
    <source>
        <dbReference type="PROSITE-ProRule" id="PRU00409"/>
    </source>
</evidence>
<evidence type="ECO:0000269" key="2">
    <source>
    </source>
</evidence>
<evidence type="ECO:0000305" key="3"/>
<evidence type="ECO:0000305" key="4">
    <source>
    </source>
</evidence>